<comment type="catalytic activity">
    <reaction>
        <text>Inactivates bleomycin B2 (a cytotoxic glycometallopeptide) by hydrolysis of a carboxyamide bond of beta-aminoalanine, but also shows general aminopeptidase activity. The specificity varies somewhat with source, but amino acid arylamides of Met, Leu and Ala are preferred.</text>
        <dbReference type="EC" id="3.4.22.40"/>
    </reaction>
</comment>
<comment type="subunit">
    <text evidence="1">Homohexamer.</text>
</comment>
<comment type="subcellular location">
    <subcellularLocation>
        <location evidence="1">Cytoplasm</location>
    </subcellularLocation>
</comment>
<comment type="similarity">
    <text evidence="2">Belongs to the peptidase C1 family.</text>
</comment>
<name>PEPC_LACDL</name>
<dbReference type="EC" id="3.4.22.40"/>
<dbReference type="EMBL" id="X80643">
    <property type="protein sequence ID" value="CAA56689.1"/>
    <property type="molecule type" value="Genomic_DNA"/>
</dbReference>
<dbReference type="PIR" id="S52865">
    <property type="entry name" value="S52865"/>
</dbReference>
<dbReference type="RefSeq" id="WP_035165147.1">
    <property type="nucleotide sequence ID" value="NZ_BJLO01000008.1"/>
</dbReference>
<dbReference type="SMR" id="Q48543"/>
<dbReference type="MEROPS" id="C01.086"/>
<dbReference type="OrthoDB" id="1111399at2"/>
<dbReference type="GO" id="GO:0005737">
    <property type="term" value="C:cytoplasm"/>
    <property type="evidence" value="ECO:0007669"/>
    <property type="project" value="UniProtKB-SubCell"/>
</dbReference>
<dbReference type="GO" id="GO:0070005">
    <property type="term" value="F:cysteine-type aminopeptidase activity"/>
    <property type="evidence" value="ECO:0007669"/>
    <property type="project" value="InterPro"/>
</dbReference>
<dbReference type="GO" id="GO:0004197">
    <property type="term" value="F:cysteine-type endopeptidase activity"/>
    <property type="evidence" value="ECO:0007669"/>
    <property type="project" value="UniProtKB-EC"/>
</dbReference>
<dbReference type="GO" id="GO:0043418">
    <property type="term" value="P:homocysteine catabolic process"/>
    <property type="evidence" value="ECO:0007669"/>
    <property type="project" value="TreeGrafter"/>
</dbReference>
<dbReference type="GO" id="GO:0006508">
    <property type="term" value="P:proteolysis"/>
    <property type="evidence" value="ECO:0007669"/>
    <property type="project" value="UniProtKB-KW"/>
</dbReference>
<dbReference type="GO" id="GO:0009636">
    <property type="term" value="P:response to toxic substance"/>
    <property type="evidence" value="ECO:0007669"/>
    <property type="project" value="TreeGrafter"/>
</dbReference>
<dbReference type="CDD" id="cd00585">
    <property type="entry name" value="Peptidase_C1B"/>
    <property type="match status" value="1"/>
</dbReference>
<dbReference type="Gene3D" id="3.90.70.10">
    <property type="entry name" value="Cysteine proteinases"/>
    <property type="match status" value="1"/>
</dbReference>
<dbReference type="InterPro" id="IPR038765">
    <property type="entry name" value="Papain-like_cys_pep_sf"/>
</dbReference>
<dbReference type="InterPro" id="IPR000169">
    <property type="entry name" value="Pept_cys_AS"/>
</dbReference>
<dbReference type="InterPro" id="IPR004134">
    <property type="entry name" value="Peptidase_C1B"/>
</dbReference>
<dbReference type="PANTHER" id="PTHR10363">
    <property type="entry name" value="BLEOMYCIN HYDROLASE"/>
    <property type="match status" value="1"/>
</dbReference>
<dbReference type="PANTHER" id="PTHR10363:SF2">
    <property type="entry name" value="BLEOMYCIN HYDROLASE"/>
    <property type="match status" value="1"/>
</dbReference>
<dbReference type="Pfam" id="PF03051">
    <property type="entry name" value="Peptidase_C1_2"/>
    <property type="match status" value="1"/>
</dbReference>
<dbReference type="PIRSF" id="PIRSF005700">
    <property type="entry name" value="PepC"/>
    <property type="match status" value="1"/>
</dbReference>
<dbReference type="SUPFAM" id="SSF54001">
    <property type="entry name" value="Cysteine proteinases"/>
    <property type="match status" value="1"/>
</dbReference>
<dbReference type="PROSITE" id="PS00139">
    <property type="entry name" value="THIOL_PROTEASE_CYS"/>
    <property type="match status" value="1"/>
</dbReference>
<accession>Q48543</accession>
<evidence type="ECO:0000250" key="1"/>
<evidence type="ECO:0000255" key="2">
    <source>
        <dbReference type="PROSITE-ProRule" id="PRU10088"/>
    </source>
</evidence>
<gene>
    <name type="primary">pepC</name>
</gene>
<feature type="chain" id="PRO_0000050590" description="Aminopeptidase C">
    <location>
        <begin position="1"/>
        <end position="449"/>
    </location>
</feature>
<feature type="active site" evidence="2">
    <location>
        <position position="70"/>
    </location>
</feature>
<feature type="active site" evidence="2">
    <location>
        <position position="364"/>
    </location>
</feature>
<feature type="active site" evidence="2">
    <location>
        <position position="385"/>
    </location>
</feature>
<keyword id="KW-0031">Aminopeptidase</keyword>
<keyword id="KW-0963">Cytoplasm</keyword>
<keyword id="KW-0378">Hydrolase</keyword>
<keyword id="KW-0645">Protease</keyword>
<keyword id="KW-0788">Thiol protease</keyword>
<reference key="1">
    <citation type="journal article" date="1994" name="FEMS Microbiol. Lett.">
        <title>Cloning and nucleotide sequence analysis of the Lactobacillus delbrueckii ssp. lactis DSM7290 cysteine aminopeptidase gene pepC.</title>
        <authorList>
            <person name="Klein J."/>
            <person name="Henrich B."/>
            <person name="Plapp R."/>
        </authorList>
    </citation>
    <scope>NUCLEOTIDE SEQUENCE [GENOMIC DNA]</scope>
    <source>
        <strain>DSM 7290</strain>
    </source>
</reference>
<sequence>MSKEISFDTIEDFTSNLSKHPAYGVAANAAQTNGIFKASQSTQSKVDLDPTFSVEIDTGSVTNQKQSGRCWMFSALNTMRHSIQKEFKLKGFELSQSYTFFWDKFEKSNFFFENVIGSADKPLGDRKVSFLFATPQSDGGQWDMLCGLIEKYGIVPKKVYPETANSENSRALNDTLNTMLRKGGLELRALVNEGKSTEEVEAHKAELLDAIFRMLATSLGLPPKSFNFEYTDDDGNYHIDKDITPQDFFKKYVGWDLENYISVINGPTADKPYNKVFSVEYLGNVVGGRQVRHLNLELSKFKELIINQLKQGEVVWFGSDVSKGGDREAGLLDTKIYQRDQLFDYDFSMSKADRLDSGESMMNHAMVITAVDLVDDKPTKWKIENSWGDKSGFKGYFVMSDEWFDQFVYQAVLNKAFLPEDVKKAYDEGKENPIELLPWDPMGALAFDF</sequence>
<protein>
    <recommendedName>
        <fullName>Aminopeptidase C</fullName>
        <ecNumber>3.4.22.40</ecNumber>
    </recommendedName>
    <alternativeName>
        <fullName>Bleomycin hydrolase</fullName>
    </alternativeName>
</protein>
<organism>
    <name type="scientific">Lactobacillus delbrueckii subsp. lactis</name>
    <dbReference type="NCBI Taxonomy" id="29397"/>
    <lineage>
        <taxon>Bacteria</taxon>
        <taxon>Bacillati</taxon>
        <taxon>Bacillota</taxon>
        <taxon>Bacilli</taxon>
        <taxon>Lactobacillales</taxon>
        <taxon>Lactobacillaceae</taxon>
        <taxon>Lactobacillus</taxon>
    </lineage>
</organism>
<proteinExistence type="inferred from homology"/>